<comment type="function">
    <text evidence="1">One of the primary rRNA binding proteins. Required for association of the 30S and 50S subunits to form the 70S ribosome, for tRNA binding and peptide bond formation. It has been suggested to have peptidyltransferase activity; this is somewhat controversial. Makes several contacts with the 16S rRNA in the 70S ribosome.</text>
</comment>
<comment type="subunit">
    <text evidence="1">Part of the 50S ribosomal subunit. Forms a bridge to the 30S subunit in the 70S ribosome.</text>
</comment>
<comment type="similarity">
    <text evidence="1">Belongs to the universal ribosomal protein uL2 family.</text>
</comment>
<proteinExistence type="inferred from homology"/>
<organism>
    <name type="scientific">Desulfitobacterium hafniense (strain Y51)</name>
    <dbReference type="NCBI Taxonomy" id="138119"/>
    <lineage>
        <taxon>Bacteria</taxon>
        <taxon>Bacillati</taxon>
        <taxon>Bacillota</taxon>
        <taxon>Clostridia</taxon>
        <taxon>Eubacteriales</taxon>
        <taxon>Desulfitobacteriaceae</taxon>
        <taxon>Desulfitobacterium</taxon>
    </lineage>
</organism>
<accession>Q250M9</accession>
<evidence type="ECO:0000255" key="1">
    <source>
        <dbReference type="HAMAP-Rule" id="MF_01320"/>
    </source>
</evidence>
<evidence type="ECO:0000256" key="2">
    <source>
        <dbReference type="SAM" id="MobiDB-lite"/>
    </source>
</evidence>
<evidence type="ECO:0000305" key="3"/>
<protein>
    <recommendedName>
        <fullName evidence="1">Large ribosomal subunit protein uL2</fullName>
    </recommendedName>
    <alternativeName>
        <fullName evidence="3">50S ribosomal protein L2</fullName>
    </alternativeName>
</protein>
<reference key="1">
    <citation type="journal article" date="2006" name="J. Bacteriol.">
        <title>Complete genome sequence of the dehalorespiring bacterium Desulfitobacterium hafniense Y51 and comparison with Dehalococcoides ethenogenes 195.</title>
        <authorList>
            <person name="Nonaka H."/>
            <person name="Keresztes G."/>
            <person name="Shinoda Y."/>
            <person name="Ikenaga Y."/>
            <person name="Abe M."/>
            <person name="Naito K."/>
            <person name="Inatomi K."/>
            <person name="Furukawa K."/>
            <person name="Inui M."/>
            <person name="Yukawa H."/>
        </authorList>
    </citation>
    <scope>NUCLEOTIDE SEQUENCE [LARGE SCALE GENOMIC DNA]</scope>
    <source>
        <strain>Y51</strain>
    </source>
</reference>
<keyword id="KW-1185">Reference proteome</keyword>
<keyword id="KW-0687">Ribonucleoprotein</keyword>
<keyword id="KW-0689">Ribosomal protein</keyword>
<keyword id="KW-0694">RNA-binding</keyword>
<keyword id="KW-0699">rRNA-binding</keyword>
<feature type="chain" id="PRO_0000309909" description="Large ribosomal subunit protein uL2">
    <location>
        <begin position="1"/>
        <end position="276"/>
    </location>
</feature>
<feature type="region of interest" description="Disordered" evidence="2">
    <location>
        <begin position="225"/>
        <end position="276"/>
    </location>
</feature>
<feature type="compositionally biased region" description="Basic residues" evidence="2">
    <location>
        <begin position="257"/>
        <end position="276"/>
    </location>
</feature>
<name>RL2_DESHY</name>
<gene>
    <name evidence="1" type="primary">rplB</name>
    <name type="ordered locus">DSY0474</name>
</gene>
<dbReference type="EMBL" id="AP008230">
    <property type="protein sequence ID" value="BAE82263.1"/>
    <property type="molecule type" value="Genomic_DNA"/>
</dbReference>
<dbReference type="RefSeq" id="WP_011459099.1">
    <property type="nucleotide sequence ID" value="NC_007907.1"/>
</dbReference>
<dbReference type="SMR" id="Q250M9"/>
<dbReference type="STRING" id="138119.DSY0474"/>
<dbReference type="KEGG" id="dsy:DSY0474"/>
<dbReference type="eggNOG" id="COG0090">
    <property type="taxonomic scope" value="Bacteria"/>
</dbReference>
<dbReference type="HOGENOM" id="CLU_036235_2_1_9"/>
<dbReference type="Proteomes" id="UP000001946">
    <property type="component" value="Chromosome"/>
</dbReference>
<dbReference type="GO" id="GO:0015934">
    <property type="term" value="C:large ribosomal subunit"/>
    <property type="evidence" value="ECO:0007669"/>
    <property type="project" value="InterPro"/>
</dbReference>
<dbReference type="GO" id="GO:0019843">
    <property type="term" value="F:rRNA binding"/>
    <property type="evidence" value="ECO:0007669"/>
    <property type="project" value="UniProtKB-UniRule"/>
</dbReference>
<dbReference type="GO" id="GO:0003735">
    <property type="term" value="F:structural constituent of ribosome"/>
    <property type="evidence" value="ECO:0007669"/>
    <property type="project" value="InterPro"/>
</dbReference>
<dbReference type="GO" id="GO:0016740">
    <property type="term" value="F:transferase activity"/>
    <property type="evidence" value="ECO:0007669"/>
    <property type="project" value="InterPro"/>
</dbReference>
<dbReference type="GO" id="GO:0002181">
    <property type="term" value="P:cytoplasmic translation"/>
    <property type="evidence" value="ECO:0007669"/>
    <property type="project" value="TreeGrafter"/>
</dbReference>
<dbReference type="FunFam" id="2.30.30.30:FF:000001">
    <property type="entry name" value="50S ribosomal protein L2"/>
    <property type="match status" value="1"/>
</dbReference>
<dbReference type="FunFam" id="2.40.50.140:FF:000003">
    <property type="entry name" value="50S ribosomal protein L2"/>
    <property type="match status" value="1"/>
</dbReference>
<dbReference type="FunFam" id="4.10.950.10:FF:000001">
    <property type="entry name" value="50S ribosomal protein L2"/>
    <property type="match status" value="1"/>
</dbReference>
<dbReference type="Gene3D" id="2.30.30.30">
    <property type="match status" value="1"/>
</dbReference>
<dbReference type="Gene3D" id="2.40.50.140">
    <property type="entry name" value="Nucleic acid-binding proteins"/>
    <property type="match status" value="1"/>
</dbReference>
<dbReference type="Gene3D" id="4.10.950.10">
    <property type="entry name" value="Ribosomal protein L2, domain 3"/>
    <property type="match status" value="1"/>
</dbReference>
<dbReference type="HAMAP" id="MF_01320_B">
    <property type="entry name" value="Ribosomal_uL2_B"/>
    <property type="match status" value="1"/>
</dbReference>
<dbReference type="InterPro" id="IPR012340">
    <property type="entry name" value="NA-bd_OB-fold"/>
</dbReference>
<dbReference type="InterPro" id="IPR014722">
    <property type="entry name" value="Rib_uL2_dom2"/>
</dbReference>
<dbReference type="InterPro" id="IPR002171">
    <property type="entry name" value="Ribosomal_uL2"/>
</dbReference>
<dbReference type="InterPro" id="IPR005880">
    <property type="entry name" value="Ribosomal_uL2_bac/org-type"/>
</dbReference>
<dbReference type="InterPro" id="IPR022669">
    <property type="entry name" value="Ribosomal_uL2_C"/>
</dbReference>
<dbReference type="InterPro" id="IPR022671">
    <property type="entry name" value="Ribosomal_uL2_CS"/>
</dbReference>
<dbReference type="InterPro" id="IPR014726">
    <property type="entry name" value="Ribosomal_uL2_dom3"/>
</dbReference>
<dbReference type="InterPro" id="IPR022666">
    <property type="entry name" value="Ribosomal_uL2_RNA-bd_dom"/>
</dbReference>
<dbReference type="InterPro" id="IPR008991">
    <property type="entry name" value="Translation_prot_SH3-like_sf"/>
</dbReference>
<dbReference type="NCBIfam" id="TIGR01171">
    <property type="entry name" value="rplB_bact"/>
    <property type="match status" value="1"/>
</dbReference>
<dbReference type="PANTHER" id="PTHR13691:SF5">
    <property type="entry name" value="LARGE RIBOSOMAL SUBUNIT PROTEIN UL2M"/>
    <property type="match status" value="1"/>
</dbReference>
<dbReference type="PANTHER" id="PTHR13691">
    <property type="entry name" value="RIBOSOMAL PROTEIN L2"/>
    <property type="match status" value="1"/>
</dbReference>
<dbReference type="Pfam" id="PF00181">
    <property type="entry name" value="Ribosomal_L2"/>
    <property type="match status" value="1"/>
</dbReference>
<dbReference type="Pfam" id="PF03947">
    <property type="entry name" value="Ribosomal_L2_C"/>
    <property type="match status" value="1"/>
</dbReference>
<dbReference type="PIRSF" id="PIRSF002158">
    <property type="entry name" value="Ribosomal_L2"/>
    <property type="match status" value="1"/>
</dbReference>
<dbReference type="SMART" id="SM01383">
    <property type="entry name" value="Ribosomal_L2"/>
    <property type="match status" value="1"/>
</dbReference>
<dbReference type="SMART" id="SM01382">
    <property type="entry name" value="Ribosomal_L2_C"/>
    <property type="match status" value="1"/>
</dbReference>
<dbReference type="SUPFAM" id="SSF50249">
    <property type="entry name" value="Nucleic acid-binding proteins"/>
    <property type="match status" value="1"/>
</dbReference>
<dbReference type="SUPFAM" id="SSF50104">
    <property type="entry name" value="Translation proteins SH3-like domain"/>
    <property type="match status" value="1"/>
</dbReference>
<dbReference type="PROSITE" id="PS00467">
    <property type="entry name" value="RIBOSOMAL_L2"/>
    <property type="match status" value="1"/>
</dbReference>
<sequence>MPVKGFKPYSPGRRQMTVSTFEEITKTTPERSLLAPLKSKAGRNNQGKLTVRHQGGGHKRKYRLIDFKRNKDSVPAKVASIEYDPNRSANIALLHYLDGHKAYILAPNGLQVGQMVVSGPDADIKVGNALPIKNIPVGTLLHNIEMKPGKGAQLVRSAGGSAQLMAKEGKYATLRLPSGEMRMVHIDCRATIGQVGNLEHENINIGKAGRSRWLGIRPTVRGAVMNPNDHPHGGGEGRNPIGRNPVTPWGKPALGAKTRKKKHPSNRFIVKRRGKK</sequence>